<comment type="function">
    <text evidence="1 2">May play a role in immune regulation through regulation of the macrophage function (By similarity). May also play a role in trafficking of proteins via its interaction with unc119 family cargo adapters (By similarity). May play a role in ciliary membrane localization (By similarity).</text>
</comment>
<comment type="subunit">
    <text evidence="2">Interacts with unc119 family proteins; interaction preferentially takes place when unc119 proteins are unliganded with myristoylated proteins.</text>
</comment>
<comment type="subcellular location">
    <subcellularLocation>
        <location evidence="2">Cytoplasm</location>
    </subcellularLocation>
    <subcellularLocation>
        <location evidence="2">Cell projection</location>
        <location evidence="2">Cilium</location>
    </subcellularLocation>
</comment>
<comment type="similarity">
    <text evidence="4">Belongs to the UNC119-binding protein family.</text>
</comment>
<keyword id="KW-0966">Cell projection</keyword>
<keyword id="KW-0969">Cilium</keyword>
<keyword id="KW-0970">Cilium biogenesis/degradation</keyword>
<keyword id="KW-0963">Cytoplasm</keyword>
<keyword id="KW-0395">Inflammatory response</keyword>
<keyword id="KW-0653">Protein transport</keyword>
<keyword id="KW-1185">Reference proteome</keyword>
<keyword id="KW-0813">Transport</keyword>
<sequence length="205" mass="22780">MEVDINGVNRTNNSVPSTAEGSSPSKPDPEKPRCSSTPCSPIRRTVSGYQILHMDANFLVGFTTGGELLKLAQKCATTEETPGESLPAFRSKQLESGLSRSSRIYKARGRQFQPYDIPAVNGRRRRRMPSSGDKCNKAVPYEPYKAAHGPLPLCLLKGKRAHSKSLDYLNLDKMNIKESADTEVLQYQLQHLTLRGDRVFARNNT</sequence>
<proteinExistence type="evidence at transcript level"/>
<gene>
    <name type="primary">macir</name>
</gene>
<dbReference type="EMBL" id="BC076830">
    <property type="protein sequence ID" value="AAH76830.1"/>
    <property type="molecule type" value="mRNA"/>
</dbReference>
<dbReference type="RefSeq" id="NP_001086578.1">
    <property type="nucleotide sequence ID" value="NM_001093109.1"/>
</dbReference>
<dbReference type="DNASU" id="446413"/>
<dbReference type="GeneID" id="446413"/>
<dbReference type="KEGG" id="xla:446413"/>
<dbReference type="AGR" id="Xenbase:XB-GENE-942418"/>
<dbReference type="CTD" id="446413"/>
<dbReference type="Xenbase" id="XB-GENE-942418">
    <property type="gene designation" value="macir.L"/>
</dbReference>
<dbReference type="OMA" id="NINEPAD"/>
<dbReference type="OrthoDB" id="9859373at2759"/>
<dbReference type="Proteomes" id="UP000186698">
    <property type="component" value="Chromosome 1L"/>
</dbReference>
<dbReference type="Bgee" id="446413">
    <property type="expression patterns" value="Expressed in blastula and 15 other cell types or tissues"/>
</dbReference>
<dbReference type="GO" id="GO:0035869">
    <property type="term" value="C:ciliary transition zone"/>
    <property type="evidence" value="ECO:0000250"/>
    <property type="project" value="UniProtKB"/>
</dbReference>
<dbReference type="GO" id="GO:0005737">
    <property type="term" value="C:cytoplasm"/>
    <property type="evidence" value="ECO:0000250"/>
    <property type="project" value="UniProtKB"/>
</dbReference>
<dbReference type="GO" id="GO:0060271">
    <property type="term" value="P:cilium assembly"/>
    <property type="evidence" value="ECO:0000250"/>
    <property type="project" value="UniProtKB"/>
</dbReference>
<dbReference type="GO" id="GO:0006954">
    <property type="term" value="P:inflammatory response"/>
    <property type="evidence" value="ECO:0007669"/>
    <property type="project" value="UniProtKB-KW"/>
</dbReference>
<dbReference type="GO" id="GO:1900016">
    <property type="term" value="P:negative regulation of cytokine production involved in inflammatory response"/>
    <property type="evidence" value="ECO:0000318"/>
    <property type="project" value="GO_Central"/>
</dbReference>
<dbReference type="GO" id="GO:0010764">
    <property type="term" value="P:negative regulation of fibroblast migration"/>
    <property type="evidence" value="ECO:0000318"/>
    <property type="project" value="GO_Central"/>
</dbReference>
<dbReference type="GO" id="GO:0050728">
    <property type="term" value="P:negative regulation of inflammatory response"/>
    <property type="evidence" value="ECO:0000250"/>
    <property type="project" value="UniProtKB"/>
</dbReference>
<dbReference type="GO" id="GO:0015031">
    <property type="term" value="P:protein transport"/>
    <property type="evidence" value="ECO:0007669"/>
    <property type="project" value="UniProtKB-KW"/>
</dbReference>
<dbReference type="InterPro" id="IPR029219">
    <property type="entry name" value="UNC119-bd"/>
</dbReference>
<dbReference type="PANTHER" id="PTHR31224:SF2">
    <property type="entry name" value="MACROPHAGE IMMUNOMETABOLISM REGULATOR"/>
    <property type="match status" value="1"/>
</dbReference>
<dbReference type="PANTHER" id="PTHR31224">
    <property type="entry name" value="UNC119-BINDING PROTEIN C5ORF30"/>
    <property type="match status" value="1"/>
</dbReference>
<dbReference type="Pfam" id="PF15435">
    <property type="entry name" value="UNC119_bdg"/>
    <property type="match status" value="1"/>
</dbReference>
<evidence type="ECO:0000250" key="1">
    <source>
        <dbReference type="UniProtKB" id="B3DHS1"/>
    </source>
</evidence>
<evidence type="ECO:0000250" key="2">
    <source>
        <dbReference type="UniProtKB" id="Q96GV9"/>
    </source>
</evidence>
<evidence type="ECO:0000256" key="3">
    <source>
        <dbReference type="SAM" id="MobiDB-lite"/>
    </source>
</evidence>
<evidence type="ECO:0000305" key="4"/>
<feature type="chain" id="PRO_0000316779" description="Macrophage immunometabolism regulator">
    <location>
        <begin position="1"/>
        <end position="205"/>
    </location>
</feature>
<feature type="region of interest" description="Disordered" evidence="3">
    <location>
        <begin position="1"/>
        <end position="40"/>
    </location>
</feature>
<feature type="compositionally biased region" description="Polar residues" evidence="3">
    <location>
        <begin position="8"/>
        <end position="25"/>
    </location>
</feature>
<accession>Q6DFB0</accession>
<organism>
    <name type="scientific">Xenopus laevis</name>
    <name type="common">African clawed frog</name>
    <dbReference type="NCBI Taxonomy" id="8355"/>
    <lineage>
        <taxon>Eukaryota</taxon>
        <taxon>Metazoa</taxon>
        <taxon>Chordata</taxon>
        <taxon>Craniata</taxon>
        <taxon>Vertebrata</taxon>
        <taxon>Euteleostomi</taxon>
        <taxon>Amphibia</taxon>
        <taxon>Batrachia</taxon>
        <taxon>Anura</taxon>
        <taxon>Pipoidea</taxon>
        <taxon>Pipidae</taxon>
        <taxon>Xenopodinae</taxon>
        <taxon>Xenopus</taxon>
        <taxon>Xenopus</taxon>
    </lineage>
</organism>
<reference key="1">
    <citation type="submission" date="2004-07" db="EMBL/GenBank/DDBJ databases">
        <authorList>
            <consortium name="NIH - Xenopus Gene Collection (XGC) project"/>
        </authorList>
    </citation>
    <scope>NUCLEOTIDE SEQUENCE [LARGE SCALE MRNA]</scope>
    <source>
        <tissue>Oocyte</tissue>
    </source>
</reference>
<name>MACIR_XENLA</name>
<protein>
    <recommendedName>
        <fullName>Macrophage immunometabolism regulator</fullName>
    </recommendedName>
</protein>